<protein>
    <recommendedName>
        <fullName evidence="1">Glutamyl-tRNA reductase</fullName>
        <shortName evidence="1">GluTR</shortName>
        <ecNumber evidence="1">1.2.1.70</ecNumber>
    </recommendedName>
</protein>
<name>HEM1_METBU</name>
<accession>Q12WM5</accession>
<gene>
    <name evidence="1" type="primary">hemA</name>
    <name type="ordered locus">Mbur_1229</name>
</gene>
<organism>
    <name type="scientific">Methanococcoides burtonii (strain DSM 6242 / NBRC 107633 / OCM 468 / ACE-M)</name>
    <dbReference type="NCBI Taxonomy" id="259564"/>
    <lineage>
        <taxon>Archaea</taxon>
        <taxon>Methanobacteriati</taxon>
        <taxon>Methanobacteriota</taxon>
        <taxon>Stenosarchaea group</taxon>
        <taxon>Methanomicrobia</taxon>
        <taxon>Methanosarcinales</taxon>
        <taxon>Methanosarcinaceae</taxon>
        <taxon>Methanococcoides</taxon>
    </lineage>
</organism>
<dbReference type="EC" id="1.2.1.70" evidence="1"/>
<dbReference type="EMBL" id="CP000300">
    <property type="protein sequence ID" value="ABE52151.1"/>
    <property type="molecule type" value="Genomic_DNA"/>
</dbReference>
<dbReference type="RefSeq" id="WP_011499297.1">
    <property type="nucleotide sequence ID" value="NC_007955.1"/>
</dbReference>
<dbReference type="SMR" id="Q12WM5"/>
<dbReference type="STRING" id="259564.Mbur_1229"/>
<dbReference type="GeneID" id="3998553"/>
<dbReference type="KEGG" id="mbu:Mbur_1229"/>
<dbReference type="HOGENOM" id="CLU_035113_0_0_2"/>
<dbReference type="OrthoDB" id="4562at2157"/>
<dbReference type="UniPathway" id="UPA00251">
    <property type="reaction ID" value="UER00316"/>
</dbReference>
<dbReference type="Proteomes" id="UP000001979">
    <property type="component" value="Chromosome"/>
</dbReference>
<dbReference type="GO" id="GO:0008883">
    <property type="term" value="F:glutamyl-tRNA reductase activity"/>
    <property type="evidence" value="ECO:0007669"/>
    <property type="project" value="UniProtKB-UniRule"/>
</dbReference>
<dbReference type="GO" id="GO:0050661">
    <property type="term" value="F:NADP binding"/>
    <property type="evidence" value="ECO:0007669"/>
    <property type="project" value="InterPro"/>
</dbReference>
<dbReference type="GO" id="GO:0019353">
    <property type="term" value="P:protoporphyrinogen IX biosynthetic process from glutamate"/>
    <property type="evidence" value="ECO:0007669"/>
    <property type="project" value="TreeGrafter"/>
</dbReference>
<dbReference type="CDD" id="cd05213">
    <property type="entry name" value="NAD_bind_Glutamyl_tRNA_reduct"/>
    <property type="match status" value="1"/>
</dbReference>
<dbReference type="FunFam" id="3.30.460.30:FF:000001">
    <property type="entry name" value="Glutamyl-tRNA reductase"/>
    <property type="match status" value="1"/>
</dbReference>
<dbReference type="FunFam" id="3.40.50.720:FF:000031">
    <property type="entry name" value="Glutamyl-tRNA reductase"/>
    <property type="match status" value="1"/>
</dbReference>
<dbReference type="Gene3D" id="3.30.460.30">
    <property type="entry name" value="Glutamyl-tRNA reductase, N-terminal domain"/>
    <property type="match status" value="1"/>
</dbReference>
<dbReference type="Gene3D" id="3.40.50.720">
    <property type="entry name" value="NAD(P)-binding Rossmann-like Domain"/>
    <property type="match status" value="1"/>
</dbReference>
<dbReference type="HAMAP" id="MF_00087">
    <property type="entry name" value="Glu_tRNA_reductase"/>
    <property type="match status" value="1"/>
</dbReference>
<dbReference type="InterPro" id="IPR000343">
    <property type="entry name" value="4pyrrol_synth_GluRdtase"/>
</dbReference>
<dbReference type="InterPro" id="IPR015896">
    <property type="entry name" value="4pyrrol_synth_GluRdtase_dimer"/>
</dbReference>
<dbReference type="InterPro" id="IPR015895">
    <property type="entry name" value="4pyrrol_synth_GluRdtase_N"/>
</dbReference>
<dbReference type="InterPro" id="IPR018214">
    <property type="entry name" value="GluRdtase_CS"/>
</dbReference>
<dbReference type="InterPro" id="IPR036453">
    <property type="entry name" value="GluRdtase_dimer_dom_sf"/>
</dbReference>
<dbReference type="InterPro" id="IPR036343">
    <property type="entry name" value="GluRdtase_N_sf"/>
</dbReference>
<dbReference type="InterPro" id="IPR036291">
    <property type="entry name" value="NAD(P)-bd_dom_sf"/>
</dbReference>
<dbReference type="InterPro" id="IPR006151">
    <property type="entry name" value="Shikm_DH/Glu-tRNA_Rdtase"/>
</dbReference>
<dbReference type="NCBIfam" id="TIGR01035">
    <property type="entry name" value="hemA"/>
    <property type="match status" value="1"/>
</dbReference>
<dbReference type="PANTHER" id="PTHR43013">
    <property type="entry name" value="GLUTAMYL-TRNA REDUCTASE"/>
    <property type="match status" value="1"/>
</dbReference>
<dbReference type="PANTHER" id="PTHR43013:SF1">
    <property type="entry name" value="GLUTAMYL-TRNA REDUCTASE"/>
    <property type="match status" value="1"/>
</dbReference>
<dbReference type="Pfam" id="PF00745">
    <property type="entry name" value="GlutR_dimer"/>
    <property type="match status" value="1"/>
</dbReference>
<dbReference type="Pfam" id="PF05201">
    <property type="entry name" value="GlutR_N"/>
    <property type="match status" value="1"/>
</dbReference>
<dbReference type="Pfam" id="PF01488">
    <property type="entry name" value="Shikimate_DH"/>
    <property type="match status" value="1"/>
</dbReference>
<dbReference type="PIRSF" id="PIRSF000445">
    <property type="entry name" value="4pyrrol_synth_GluRdtase"/>
    <property type="match status" value="1"/>
</dbReference>
<dbReference type="SUPFAM" id="SSF69742">
    <property type="entry name" value="Glutamyl tRNA-reductase catalytic, N-terminal domain"/>
    <property type="match status" value="1"/>
</dbReference>
<dbReference type="SUPFAM" id="SSF69075">
    <property type="entry name" value="Glutamyl tRNA-reductase dimerization domain"/>
    <property type="match status" value="1"/>
</dbReference>
<dbReference type="SUPFAM" id="SSF51735">
    <property type="entry name" value="NAD(P)-binding Rossmann-fold domains"/>
    <property type="match status" value="1"/>
</dbReference>
<dbReference type="PROSITE" id="PS00747">
    <property type="entry name" value="GLUTR"/>
    <property type="match status" value="1"/>
</dbReference>
<keyword id="KW-0521">NADP</keyword>
<keyword id="KW-0560">Oxidoreductase</keyword>
<keyword id="KW-0627">Porphyrin biosynthesis</keyword>
<evidence type="ECO:0000255" key="1">
    <source>
        <dbReference type="HAMAP-Rule" id="MF_00087"/>
    </source>
</evidence>
<comment type="function">
    <text evidence="1">Catalyzes the NADPH-dependent reduction of glutamyl-tRNA(Glu) to glutamate 1-semialdehyde (GSA).</text>
</comment>
<comment type="catalytic activity">
    <reaction evidence="1">
        <text>(S)-4-amino-5-oxopentanoate + tRNA(Glu) + NADP(+) = L-glutamyl-tRNA(Glu) + NADPH + H(+)</text>
        <dbReference type="Rhea" id="RHEA:12344"/>
        <dbReference type="Rhea" id="RHEA-COMP:9663"/>
        <dbReference type="Rhea" id="RHEA-COMP:9680"/>
        <dbReference type="ChEBI" id="CHEBI:15378"/>
        <dbReference type="ChEBI" id="CHEBI:57501"/>
        <dbReference type="ChEBI" id="CHEBI:57783"/>
        <dbReference type="ChEBI" id="CHEBI:58349"/>
        <dbReference type="ChEBI" id="CHEBI:78442"/>
        <dbReference type="ChEBI" id="CHEBI:78520"/>
        <dbReference type="EC" id="1.2.1.70"/>
    </reaction>
</comment>
<comment type="pathway">
    <text evidence="1">Porphyrin-containing compound metabolism; protoporphyrin-IX biosynthesis; 5-aminolevulinate from L-glutamyl-tRNA(Glu): step 1/2.</text>
</comment>
<comment type="subunit">
    <text evidence="1">Homodimer.</text>
</comment>
<comment type="domain">
    <text evidence="1">Possesses an unusual extended V-shaped dimeric structure with each monomer consisting of three distinct domains arranged along a curved 'spinal' alpha-helix. The N-terminal catalytic domain specifically recognizes the glutamate moiety of the substrate. The second domain is the NADPH-binding domain, and the third C-terminal domain is responsible for dimerization.</text>
</comment>
<comment type="miscellaneous">
    <text evidence="1">During catalysis, the active site Cys acts as a nucleophile attacking the alpha-carbonyl group of tRNA-bound glutamate with the formation of a thioester intermediate between enzyme and glutamate, and the concomitant release of tRNA(Glu). The thioester intermediate is finally reduced by direct hydride transfer from NADPH, to form the product GSA.</text>
</comment>
<comment type="similarity">
    <text evidence="1">Belongs to the glutamyl-tRNA reductase family.</text>
</comment>
<reference key="1">
    <citation type="journal article" date="2009" name="ISME J.">
        <title>The genome sequence of the psychrophilic archaeon, Methanococcoides burtonii: the role of genome evolution in cold adaptation.</title>
        <authorList>
            <person name="Allen M.A."/>
            <person name="Lauro F.M."/>
            <person name="Williams T.J."/>
            <person name="Burg D."/>
            <person name="Siddiqui K.S."/>
            <person name="De Francisci D."/>
            <person name="Chong K.W."/>
            <person name="Pilak O."/>
            <person name="Chew H.H."/>
            <person name="De Maere M.Z."/>
            <person name="Ting L."/>
            <person name="Katrib M."/>
            <person name="Ng C."/>
            <person name="Sowers K.R."/>
            <person name="Galperin M.Y."/>
            <person name="Anderson I.J."/>
            <person name="Ivanova N."/>
            <person name="Dalin E."/>
            <person name="Martinez M."/>
            <person name="Lapidus A."/>
            <person name="Hauser L."/>
            <person name="Land M."/>
            <person name="Thomas T."/>
            <person name="Cavicchioli R."/>
        </authorList>
    </citation>
    <scope>NUCLEOTIDE SEQUENCE [LARGE SCALE GENOMIC DNA]</scope>
    <source>
        <strain>DSM 6242 / NBRC 107633 / OCM 468 / ACE-M</strain>
    </source>
</reference>
<sequence length="422" mass="47205">MTEISSMVITHAKATVEEMEDSWHGDIDLVLSQLYSNELVYECAVLKTCNRVEIYVVSSKGSSVLFHYAKEMGVSAKIVEFYDHDESLRHLLRLACGLESMIIGEDQILGQIKDFFLMAKGAGTVGKVLSTAFSKAIQVGKRVRTETFINRGAVSIASAAVDLAEDILDGLNDKHILVIGTGEMGTLVTRALSHRDMHVIYLANRTYEKARDLAEELGGEAVMFDQLEKYVRAADVVISATSAPHYVLKGDLVAKVMEGRENELLLIDIASPRDIDPAVEEIPHVILRNIDGLRVINEKNLQMRMVEAKKAEIIIDDELDMVKAQYKRQKADAIISNLYSQSHGLRHNEMEHAINKLSAYHTIGEIERKVLEDLTHAITNKILAEPTKKLRNAAEYDDDKFLDSVSRLFDIRPIKKNDGITK</sequence>
<feature type="chain" id="PRO_1000004637" description="Glutamyl-tRNA reductase">
    <location>
        <begin position="1"/>
        <end position="422"/>
    </location>
</feature>
<feature type="active site" description="Nucleophile" evidence="1">
    <location>
        <position position="49"/>
    </location>
</feature>
<feature type="binding site" evidence="1">
    <location>
        <begin position="48"/>
        <end position="51"/>
    </location>
    <ligand>
        <name>substrate</name>
    </ligand>
</feature>
<feature type="binding site" evidence="1">
    <location>
        <position position="100"/>
    </location>
    <ligand>
        <name>substrate</name>
    </ligand>
</feature>
<feature type="binding site" evidence="1">
    <location>
        <begin position="105"/>
        <end position="107"/>
    </location>
    <ligand>
        <name>substrate</name>
    </ligand>
</feature>
<feature type="binding site" evidence="1">
    <location>
        <position position="111"/>
    </location>
    <ligand>
        <name>substrate</name>
    </ligand>
</feature>
<feature type="binding site" evidence="1">
    <location>
        <begin position="180"/>
        <end position="185"/>
    </location>
    <ligand>
        <name>NADP(+)</name>
        <dbReference type="ChEBI" id="CHEBI:58349"/>
    </ligand>
</feature>
<feature type="site" description="Important for activity" evidence="1">
    <location>
        <position position="90"/>
    </location>
</feature>
<proteinExistence type="inferred from homology"/>